<evidence type="ECO:0000256" key="1">
    <source>
        <dbReference type="SAM" id="MobiDB-lite"/>
    </source>
</evidence>
<evidence type="ECO:0000305" key="2"/>
<comment type="similarity">
    <text evidence="2">Belongs to the PPR family. P subfamily.</text>
</comment>
<comment type="online information" name="Pentatricopeptide repeat proteins">
    <link uri="https://ppr.plantenergy.uwa.edu.au"/>
</comment>
<feature type="chain" id="PRO_0000363445" description="Pentatricopeptide repeat-containing protein At4g20740">
    <location>
        <begin position="1"/>
        <end position="727"/>
    </location>
</feature>
<feature type="repeat" description="PPR 1">
    <location>
        <begin position="157"/>
        <end position="191"/>
    </location>
</feature>
<feature type="repeat" description="PPR 2">
    <location>
        <begin position="192"/>
        <end position="226"/>
    </location>
</feature>
<feature type="repeat" description="PPR 3">
    <location>
        <begin position="227"/>
        <end position="261"/>
    </location>
</feature>
<feature type="repeat" description="PPR 4">
    <location>
        <begin position="262"/>
        <end position="296"/>
    </location>
</feature>
<feature type="repeat" description="PPR 5">
    <location>
        <begin position="297"/>
        <end position="331"/>
    </location>
</feature>
<feature type="repeat" description="PPR 6">
    <location>
        <begin position="332"/>
        <end position="366"/>
    </location>
</feature>
<feature type="repeat" description="PPR 7">
    <location>
        <begin position="367"/>
        <end position="401"/>
    </location>
</feature>
<feature type="repeat" description="PPR 8">
    <location>
        <begin position="402"/>
        <end position="436"/>
    </location>
</feature>
<feature type="repeat" description="PPR 9">
    <location>
        <begin position="437"/>
        <end position="471"/>
    </location>
</feature>
<feature type="repeat" description="PPR 10">
    <location>
        <begin position="506"/>
        <end position="540"/>
    </location>
</feature>
<feature type="repeat" description="PPR 11">
    <location>
        <begin position="541"/>
        <end position="575"/>
    </location>
</feature>
<feature type="repeat" description="PPR 12">
    <location>
        <begin position="576"/>
        <end position="606"/>
    </location>
</feature>
<feature type="repeat" description="PPR 13">
    <location>
        <begin position="612"/>
        <end position="646"/>
    </location>
</feature>
<feature type="repeat" description="PPR 14">
    <location>
        <begin position="647"/>
        <end position="681"/>
    </location>
</feature>
<feature type="region of interest" description="Disordered" evidence="1">
    <location>
        <begin position="1"/>
        <end position="84"/>
    </location>
</feature>
<feature type="compositionally biased region" description="Polar residues" evidence="1">
    <location>
        <begin position="38"/>
        <end position="56"/>
    </location>
</feature>
<feature type="compositionally biased region" description="Basic and acidic residues" evidence="1">
    <location>
        <begin position="59"/>
        <end position="70"/>
    </location>
</feature>
<reference key="1">
    <citation type="journal article" date="1999" name="Nature">
        <title>Sequence and analysis of chromosome 4 of the plant Arabidopsis thaliana.</title>
        <authorList>
            <person name="Mayer K.F.X."/>
            <person name="Schueller C."/>
            <person name="Wambutt R."/>
            <person name="Murphy G."/>
            <person name="Volckaert G."/>
            <person name="Pohl T."/>
            <person name="Duesterhoeft A."/>
            <person name="Stiekema W."/>
            <person name="Entian K.-D."/>
            <person name="Terryn N."/>
            <person name="Harris B."/>
            <person name="Ansorge W."/>
            <person name="Brandt P."/>
            <person name="Grivell L.A."/>
            <person name="Rieger M."/>
            <person name="Weichselgartner M."/>
            <person name="de Simone V."/>
            <person name="Obermaier B."/>
            <person name="Mache R."/>
            <person name="Mueller M."/>
            <person name="Kreis M."/>
            <person name="Delseny M."/>
            <person name="Puigdomenech P."/>
            <person name="Watson M."/>
            <person name="Schmidtheini T."/>
            <person name="Reichert B."/>
            <person name="Portetelle D."/>
            <person name="Perez-Alonso M."/>
            <person name="Boutry M."/>
            <person name="Bancroft I."/>
            <person name="Vos P."/>
            <person name="Hoheisel J."/>
            <person name="Zimmermann W."/>
            <person name="Wedler H."/>
            <person name="Ridley P."/>
            <person name="Langham S.-A."/>
            <person name="McCullagh B."/>
            <person name="Bilham L."/>
            <person name="Robben J."/>
            <person name="van der Schueren J."/>
            <person name="Grymonprez B."/>
            <person name="Chuang Y.-J."/>
            <person name="Vandenbussche F."/>
            <person name="Braeken M."/>
            <person name="Weltjens I."/>
            <person name="Voet M."/>
            <person name="Bastiaens I."/>
            <person name="Aert R."/>
            <person name="Defoor E."/>
            <person name="Weitzenegger T."/>
            <person name="Bothe G."/>
            <person name="Ramsperger U."/>
            <person name="Hilbert H."/>
            <person name="Braun M."/>
            <person name="Holzer E."/>
            <person name="Brandt A."/>
            <person name="Peters S."/>
            <person name="van Staveren M."/>
            <person name="Dirkse W."/>
            <person name="Mooijman P."/>
            <person name="Klein Lankhorst R."/>
            <person name="Rose M."/>
            <person name="Hauf J."/>
            <person name="Koetter P."/>
            <person name="Berneiser S."/>
            <person name="Hempel S."/>
            <person name="Feldpausch M."/>
            <person name="Lamberth S."/>
            <person name="Van den Daele H."/>
            <person name="De Keyser A."/>
            <person name="Buysshaert C."/>
            <person name="Gielen J."/>
            <person name="Villarroel R."/>
            <person name="De Clercq R."/>
            <person name="van Montagu M."/>
            <person name="Rogers J."/>
            <person name="Cronin A."/>
            <person name="Quail M.A."/>
            <person name="Bray-Allen S."/>
            <person name="Clark L."/>
            <person name="Doggett J."/>
            <person name="Hall S."/>
            <person name="Kay M."/>
            <person name="Lennard N."/>
            <person name="McLay K."/>
            <person name="Mayes R."/>
            <person name="Pettett A."/>
            <person name="Rajandream M.A."/>
            <person name="Lyne M."/>
            <person name="Benes V."/>
            <person name="Rechmann S."/>
            <person name="Borkova D."/>
            <person name="Bloecker H."/>
            <person name="Scharfe M."/>
            <person name="Grimm M."/>
            <person name="Loehnert T.-H."/>
            <person name="Dose S."/>
            <person name="de Haan M."/>
            <person name="Maarse A.C."/>
            <person name="Schaefer M."/>
            <person name="Mueller-Auer S."/>
            <person name="Gabel C."/>
            <person name="Fuchs M."/>
            <person name="Fartmann B."/>
            <person name="Granderath K."/>
            <person name="Dauner D."/>
            <person name="Herzl A."/>
            <person name="Neumann S."/>
            <person name="Argiriou A."/>
            <person name="Vitale D."/>
            <person name="Liguori R."/>
            <person name="Piravandi E."/>
            <person name="Massenet O."/>
            <person name="Quigley F."/>
            <person name="Clabauld G."/>
            <person name="Muendlein A."/>
            <person name="Felber R."/>
            <person name="Schnabl S."/>
            <person name="Hiller R."/>
            <person name="Schmidt W."/>
            <person name="Lecharny A."/>
            <person name="Aubourg S."/>
            <person name="Chefdor F."/>
            <person name="Cooke R."/>
            <person name="Berger C."/>
            <person name="Monfort A."/>
            <person name="Casacuberta E."/>
            <person name="Gibbons T."/>
            <person name="Weber N."/>
            <person name="Vandenbol M."/>
            <person name="Bargues M."/>
            <person name="Terol J."/>
            <person name="Torres A."/>
            <person name="Perez-Perez A."/>
            <person name="Purnelle B."/>
            <person name="Bent E."/>
            <person name="Johnson S."/>
            <person name="Tacon D."/>
            <person name="Jesse T."/>
            <person name="Heijnen L."/>
            <person name="Schwarz S."/>
            <person name="Scholler P."/>
            <person name="Heber S."/>
            <person name="Francs P."/>
            <person name="Bielke C."/>
            <person name="Frishman D."/>
            <person name="Haase D."/>
            <person name="Lemcke K."/>
            <person name="Mewes H.-W."/>
            <person name="Stocker S."/>
            <person name="Zaccaria P."/>
            <person name="Bevan M."/>
            <person name="Wilson R.K."/>
            <person name="de la Bastide M."/>
            <person name="Habermann K."/>
            <person name="Parnell L."/>
            <person name="Dedhia N."/>
            <person name="Gnoj L."/>
            <person name="Schutz K."/>
            <person name="Huang E."/>
            <person name="Spiegel L."/>
            <person name="Sekhon M."/>
            <person name="Murray J."/>
            <person name="Sheet P."/>
            <person name="Cordes M."/>
            <person name="Abu-Threideh J."/>
            <person name="Stoneking T."/>
            <person name="Kalicki J."/>
            <person name="Graves T."/>
            <person name="Harmon G."/>
            <person name="Edwards J."/>
            <person name="Latreille P."/>
            <person name="Courtney L."/>
            <person name="Cloud J."/>
            <person name="Abbott A."/>
            <person name="Scott K."/>
            <person name="Johnson D."/>
            <person name="Minx P."/>
            <person name="Bentley D."/>
            <person name="Fulton B."/>
            <person name="Miller N."/>
            <person name="Greco T."/>
            <person name="Kemp K."/>
            <person name="Kramer J."/>
            <person name="Fulton L."/>
            <person name="Mardis E."/>
            <person name="Dante M."/>
            <person name="Pepin K."/>
            <person name="Hillier L.W."/>
            <person name="Nelson J."/>
            <person name="Spieth J."/>
            <person name="Ryan E."/>
            <person name="Andrews S."/>
            <person name="Geisel C."/>
            <person name="Layman D."/>
            <person name="Du H."/>
            <person name="Ali J."/>
            <person name="Berghoff A."/>
            <person name="Jones K."/>
            <person name="Drone K."/>
            <person name="Cotton M."/>
            <person name="Joshu C."/>
            <person name="Antonoiu B."/>
            <person name="Zidanic M."/>
            <person name="Strong C."/>
            <person name="Sun H."/>
            <person name="Lamar B."/>
            <person name="Yordan C."/>
            <person name="Ma P."/>
            <person name="Zhong J."/>
            <person name="Preston R."/>
            <person name="Vil D."/>
            <person name="Shekher M."/>
            <person name="Matero A."/>
            <person name="Shah R."/>
            <person name="Swaby I.K."/>
            <person name="O'Shaughnessy A."/>
            <person name="Rodriguez M."/>
            <person name="Hoffman J."/>
            <person name="Till S."/>
            <person name="Granat S."/>
            <person name="Shohdy N."/>
            <person name="Hasegawa A."/>
            <person name="Hameed A."/>
            <person name="Lodhi M."/>
            <person name="Johnson A."/>
            <person name="Chen E."/>
            <person name="Marra M.A."/>
            <person name="Martienssen R."/>
            <person name="McCombie W.R."/>
        </authorList>
    </citation>
    <scope>NUCLEOTIDE SEQUENCE [LARGE SCALE GENOMIC DNA]</scope>
    <source>
        <strain>cv. Columbia</strain>
    </source>
</reference>
<reference key="2">
    <citation type="journal article" date="2017" name="Plant J.">
        <title>Araport11: a complete reannotation of the Arabidopsis thaliana reference genome.</title>
        <authorList>
            <person name="Cheng C.Y."/>
            <person name="Krishnakumar V."/>
            <person name="Chan A.P."/>
            <person name="Thibaud-Nissen F."/>
            <person name="Schobel S."/>
            <person name="Town C.D."/>
        </authorList>
    </citation>
    <scope>GENOME REANNOTATION</scope>
    <source>
        <strain>cv. Columbia</strain>
    </source>
</reference>
<reference key="3">
    <citation type="journal article" date="2004" name="Plant Cell">
        <title>Genome-wide analysis of Arabidopsis pentatricopeptide repeat proteins reveals their essential role in organelle biogenesis.</title>
        <authorList>
            <person name="Lurin C."/>
            <person name="Andres C."/>
            <person name="Aubourg S."/>
            <person name="Bellaoui M."/>
            <person name="Bitton F."/>
            <person name="Bruyere C."/>
            <person name="Caboche M."/>
            <person name="Debast C."/>
            <person name="Gualberto J."/>
            <person name="Hoffmann B."/>
            <person name="Lecharny A."/>
            <person name="Le Ret M."/>
            <person name="Martin-Magniette M.-L."/>
            <person name="Mireau H."/>
            <person name="Peeters N."/>
            <person name="Renou J.-P."/>
            <person name="Szurek B."/>
            <person name="Taconnat L."/>
            <person name="Small I."/>
        </authorList>
    </citation>
    <scope>GENE FAMILY</scope>
</reference>
<dbReference type="EMBL" id="AL080254">
    <property type="protein sequence ID" value="CAB45840.1"/>
    <property type="molecule type" value="Genomic_DNA"/>
</dbReference>
<dbReference type="EMBL" id="AL161553">
    <property type="protein sequence ID" value="CAB79074.1"/>
    <property type="molecule type" value="Genomic_DNA"/>
</dbReference>
<dbReference type="EMBL" id="CP002687">
    <property type="protein sequence ID" value="AEE84357.1"/>
    <property type="molecule type" value="Genomic_DNA"/>
</dbReference>
<dbReference type="PIR" id="T10616">
    <property type="entry name" value="T10616"/>
</dbReference>
<dbReference type="SMR" id="Q9SVH3"/>
<dbReference type="FunCoup" id="Q9SVH3">
    <property type="interactions" value="1365"/>
</dbReference>
<dbReference type="STRING" id="3702.Q9SVH3"/>
<dbReference type="GlyGen" id="Q9SVH3">
    <property type="glycosylation" value="1 site"/>
</dbReference>
<dbReference type="PaxDb" id="3702-AT4G20740.1"/>
<dbReference type="ProteomicsDB" id="249228"/>
<dbReference type="EnsemblPlants" id="AT4G20740.1">
    <property type="protein sequence ID" value="AT4G20740.1"/>
    <property type="gene ID" value="AT4G20740"/>
</dbReference>
<dbReference type="GeneID" id="827823"/>
<dbReference type="Gramene" id="AT4G20740.1">
    <property type="protein sequence ID" value="AT4G20740.1"/>
    <property type="gene ID" value="AT4G20740"/>
</dbReference>
<dbReference type="KEGG" id="ath:AT4G20740"/>
<dbReference type="Araport" id="AT4G20740"/>
<dbReference type="TAIR" id="AT4G20740">
    <property type="gene designation" value="EMB3131"/>
</dbReference>
<dbReference type="eggNOG" id="KOG4197">
    <property type="taxonomic scope" value="Eukaryota"/>
</dbReference>
<dbReference type="HOGENOM" id="CLU_002706_47_0_1"/>
<dbReference type="InParanoid" id="Q9SVH3"/>
<dbReference type="OMA" id="EVHACNR"/>
<dbReference type="OrthoDB" id="185373at2759"/>
<dbReference type="PhylomeDB" id="Q9SVH3"/>
<dbReference type="PRO" id="PR:Q9SVH3"/>
<dbReference type="Proteomes" id="UP000006548">
    <property type="component" value="Chromosome 4"/>
</dbReference>
<dbReference type="ExpressionAtlas" id="Q9SVH3">
    <property type="expression patterns" value="baseline and differential"/>
</dbReference>
<dbReference type="Gene3D" id="1.25.40.10">
    <property type="entry name" value="Tetratricopeptide repeat domain"/>
    <property type="match status" value="5"/>
</dbReference>
<dbReference type="InterPro" id="IPR002885">
    <property type="entry name" value="Pentatricopeptide_rpt"/>
</dbReference>
<dbReference type="InterPro" id="IPR011990">
    <property type="entry name" value="TPR-like_helical_dom_sf"/>
</dbReference>
<dbReference type="NCBIfam" id="TIGR00756">
    <property type="entry name" value="PPR"/>
    <property type="match status" value="7"/>
</dbReference>
<dbReference type="PANTHER" id="PTHR47938:SF35">
    <property type="entry name" value="PENTATRICOPEPTIDE REPEAT-CONTAINING PROTEIN 4, MITOCHONDRIAL-RELATED"/>
    <property type="match status" value="1"/>
</dbReference>
<dbReference type="PANTHER" id="PTHR47938">
    <property type="entry name" value="RESPIRATORY COMPLEX I CHAPERONE (CIA84), PUTATIVE (AFU_ORTHOLOGUE AFUA_2G06020)-RELATED"/>
    <property type="match status" value="1"/>
</dbReference>
<dbReference type="Pfam" id="PF01535">
    <property type="entry name" value="PPR"/>
    <property type="match status" value="1"/>
</dbReference>
<dbReference type="Pfam" id="PF12854">
    <property type="entry name" value="PPR_1"/>
    <property type="match status" value="1"/>
</dbReference>
<dbReference type="Pfam" id="PF13041">
    <property type="entry name" value="PPR_2"/>
    <property type="match status" value="3"/>
</dbReference>
<dbReference type="Pfam" id="PF13812">
    <property type="entry name" value="PPR_3"/>
    <property type="match status" value="1"/>
</dbReference>
<dbReference type="SUPFAM" id="SSF81901">
    <property type="entry name" value="HCP-like"/>
    <property type="match status" value="1"/>
</dbReference>
<dbReference type="PROSITE" id="PS51375">
    <property type="entry name" value="PPR"/>
    <property type="match status" value="14"/>
</dbReference>
<proteinExistence type="inferred from homology"/>
<name>PP328_ARATH</name>
<protein>
    <recommendedName>
        <fullName>Pentatricopeptide repeat-containing protein At4g20740</fullName>
    </recommendedName>
</protein>
<gene>
    <name type="ordered locus">At4g20740</name>
    <name type="ORF">F21C20.90</name>
</gene>
<sequence>MKSPKPPNLSDKSLKPNFFHGHRKPSQNRPTVYGGLFSNRQSIPRVSPQPQSNSLAHRTPFDLRKWDPETHLPPPSPPSHSTVISAASERLSPIARFVLDAFRKNRNHWGPSVVSELNKLRRVTPSIVAEVLKLGNDAAVAAKFFHWAGKQKGYKHDFAAYNAFAYCLNRNGHFRAADQLPELMDSQGRPPSEKQFEILIRMHADNRRGLRVYYVYEKMKKFGFKPRVFLYNRIMDALVKNGYFDLALAVYEDFKEDGLVEESTTFMILVKGLCKAGRIEEMLEILQRMRENLCKPDVFAYTAMIKTLVSEGNLDASLRVWDEMRRDEIKPDVMAYGTLVVGLCKDGRVERGYELFMEMKGKQILIDREIYRVLIEGFVADGKVRSACNLWEDLVDSGYIADIGIYNAVIKGLCSVNQVDKAYKLFQVAIEEELEPDFETLSPIMVAYVVMNRLSDFSNVLERIGELGYPVSDYLTQFFKLLCADEEKNAMALDVFYILKTKGHGSVSVYNILMEALYKMGDIQKSLSLFYEMRKLGFEPDSSSYSIAICCFVEKGDVKAACSFHEKIIEMSCVPSIAAYLSLTKGLCQIGEIDAVMLLVRECLGNVESGPMEFKYALTVCHVCKGSNAEKVMKVVDEMNQEGVFINEVIYCAIISGMSKHGTIKVAREVFTELKKRKVMTEADMVVYEEMLIEQTKKKTADLVLSGIKFFGLESKLRAKGCRLLDN</sequence>
<accession>Q9SVH3</accession>
<keyword id="KW-1185">Reference proteome</keyword>
<keyword id="KW-0677">Repeat</keyword>
<organism>
    <name type="scientific">Arabidopsis thaliana</name>
    <name type="common">Mouse-ear cress</name>
    <dbReference type="NCBI Taxonomy" id="3702"/>
    <lineage>
        <taxon>Eukaryota</taxon>
        <taxon>Viridiplantae</taxon>
        <taxon>Streptophyta</taxon>
        <taxon>Embryophyta</taxon>
        <taxon>Tracheophyta</taxon>
        <taxon>Spermatophyta</taxon>
        <taxon>Magnoliopsida</taxon>
        <taxon>eudicotyledons</taxon>
        <taxon>Gunneridae</taxon>
        <taxon>Pentapetalae</taxon>
        <taxon>rosids</taxon>
        <taxon>malvids</taxon>
        <taxon>Brassicales</taxon>
        <taxon>Brassicaceae</taxon>
        <taxon>Camelineae</taxon>
        <taxon>Arabidopsis</taxon>
    </lineage>
</organism>